<protein>
    <recommendedName>
        <fullName evidence="1">Large ribosomal subunit protein bL19</fullName>
    </recommendedName>
    <alternativeName>
        <fullName evidence="2">50S ribosomal protein L19</fullName>
    </alternativeName>
</protein>
<evidence type="ECO:0000255" key="1">
    <source>
        <dbReference type="HAMAP-Rule" id="MF_00402"/>
    </source>
</evidence>
<evidence type="ECO:0000305" key="2"/>
<sequence>MNLIAKLEQEEIERALAGKTIPEFAPGDTVIVNVNVVEGNRKRVQAYEGVVIAIRNRGLNSNFIVRKISSGEGVERTFQTYSPLLASIVVKRRGDVRRAKLYYLRERSGKSARIKEKLVSKDRTAAASQE</sequence>
<accession>A4JCK0</accession>
<reference key="1">
    <citation type="submission" date="2007-03" db="EMBL/GenBank/DDBJ databases">
        <title>Complete sequence of chromosome 1 of Burkholderia vietnamiensis G4.</title>
        <authorList>
            <consortium name="US DOE Joint Genome Institute"/>
            <person name="Copeland A."/>
            <person name="Lucas S."/>
            <person name="Lapidus A."/>
            <person name="Barry K."/>
            <person name="Detter J.C."/>
            <person name="Glavina del Rio T."/>
            <person name="Hammon N."/>
            <person name="Israni S."/>
            <person name="Dalin E."/>
            <person name="Tice H."/>
            <person name="Pitluck S."/>
            <person name="Chain P."/>
            <person name="Malfatti S."/>
            <person name="Shin M."/>
            <person name="Vergez L."/>
            <person name="Schmutz J."/>
            <person name="Larimer F."/>
            <person name="Land M."/>
            <person name="Hauser L."/>
            <person name="Kyrpides N."/>
            <person name="Tiedje J."/>
            <person name="Richardson P."/>
        </authorList>
    </citation>
    <scope>NUCLEOTIDE SEQUENCE [LARGE SCALE GENOMIC DNA]</scope>
    <source>
        <strain>G4 / LMG 22486</strain>
    </source>
</reference>
<comment type="function">
    <text evidence="1">This protein is located at the 30S-50S ribosomal subunit interface and may play a role in the structure and function of the aminoacyl-tRNA binding site.</text>
</comment>
<comment type="similarity">
    <text evidence="1">Belongs to the bacterial ribosomal protein bL19 family.</text>
</comment>
<organism>
    <name type="scientific">Burkholderia vietnamiensis (strain G4 / LMG 22486)</name>
    <name type="common">Burkholderia cepacia (strain R1808)</name>
    <dbReference type="NCBI Taxonomy" id="269482"/>
    <lineage>
        <taxon>Bacteria</taxon>
        <taxon>Pseudomonadati</taxon>
        <taxon>Pseudomonadota</taxon>
        <taxon>Betaproteobacteria</taxon>
        <taxon>Burkholderiales</taxon>
        <taxon>Burkholderiaceae</taxon>
        <taxon>Burkholderia</taxon>
        <taxon>Burkholderia cepacia complex</taxon>
    </lineage>
</organism>
<keyword id="KW-0687">Ribonucleoprotein</keyword>
<keyword id="KW-0689">Ribosomal protein</keyword>
<name>RL19_BURVG</name>
<gene>
    <name evidence="1" type="primary">rplS</name>
    <name type="ordered locus">Bcep1808_0992</name>
</gene>
<proteinExistence type="inferred from homology"/>
<feature type="chain" id="PRO_1000049649" description="Large ribosomal subunit protein bL19">
    <location>
        <begin position="1"/>
        <end position="130"/>
    </location>
</feature>
<dbReference type="EMBL" id="CP000614">
    <property type="protein sequence ID" value="ABO54003.1"/>
    <property type="molecule type" value="Genomic_DNA"/>
</dbReference>
<dbReference type="SMR" id="A4JCK0"/>
<dbReference type="KEGG" id="bvi:Bcep1808_0992"/>
<dbReference type="eggNOG" id="COG0335">
    <property type="taxonomic scope" value="Bacteria"/>
</dbReference>
<dbReference type="HOGENOM" id="CLU_103507_1_0_4"/>
<dbReference type="Proteomes" id="UP000002287">
    <property type="component" value="Chromosome 1"/>
</dbReference>
<dbReference type="GO" id="GO:0022625">
    <property type="term" value="C:cytosolic large ribosomal subunit"/>
    <property type="evidence" value="ECO:0007669"/>
    <property type="project" value="TreeGrafter"/>
</dbReference>
<dbReference type="GO" id="GO:0003735">
    <property type="term" value="F:structural constituent of ribosome"/>
    <property type="evidence" value="ECO:0007669"/>
    <property type="project" value="InterPro"/>
</dbReference>
<dbReference type="GO" id="GO:0006412">
    <property type="term" value="P:translation"/>
    <property type="evidence" value="ECO:0007669"/>
    <property type="project" value="UniProtKB-UniRule"/>
</dbReference>
<dbReference type="FunFam" id="2.30.30.790:FF:000001">
    <property type="entry name" value="50S ribosomal protein L19"/>
    <property type="match status" value="1"/>
</dbReference>
<dbReference type="Gene3D" id="2.30.30.790">
    <property type="match status" value="1"/>
</dbReference>
<dbReference type="HAMAP" id="MF_00402">
    <property type="entry name" value="Ribosomal_bL19"/>
    <property type="match status" value="1"/>
</dbReference>
<dbReference type="InterPro" id="IPR001857">
    <property type="entry name" value="Ribosomal_bL19"/>
</dbReference>
<dbReference type="InterPro" id="IPR018257">
    <property type="entry name" value="Ribosomal_bL19_CS"/>
</dbReference>
<dbReference type="InterPro" id="IPR038657">
    <property type="entry name" value="Ribosomal_bL19_sf"/>
</dbReference>
<dbReference type="InterPro" id="IPR008991">
    <property type="entry name" value="Translation_prot_SH3-like_sf"/>
</dbReference>
<dbReference type="NCBIfam" id="TIGR01024">
    <property type="entry name" value="rplS_bact"/>
    <property type="match status" value="1"/>
</dbReference>
<dbReference type="PANTHER" id="PTHR15680:SF9">
    <property type="entry name" value="LARGE RIBOSOMAL SUBUNIT PROTEIN BL19M"/>
    <property type="match status" value="1"/>
</dbReference>
<dbReference type="PANTHER" id="PTHR15680">
    <property type="entry name" value="RIBOSOMAL PROTEIN L19"/>
    <property type="match status" value="1"/>
</dbReference>
<dbReference type="Pfam" id="PF01245">
    <property type="entry name" value="Ribosomal_L19"/>
    <property type="match status" value="1"/>
</dbReference>
<dbReference type="PIRSF" id="PIRSF002191">
    <property type="entry name" value="Ribosomal_L19"/>
    <property type="match status" value="1"/>
</dbReference>
<dbReference type="PRINTS" id="PR00061">
    <property type="entry name" value="RIBOSOMALL19"/>
</dbReference>
<dbReference type="SUPFAM" id="SSF50104">
    <property type="entry name" value="Translation proteins SH3-like domain"/>
    <property type="match status" value="1"/>
</dbReference>
<dbReference type="PROSITE" id="PS01015">
    <property type="entry name" value="RIBOSOMAL_L19"/>
    <property type="match status" value="1"/>
</dbReference>